<evidence type="ECO:0000255" key="1"/>
<evidence type="ECO:0000255" key="2">
    <source>
        <dbReference type="PROSITE-ProRule" id="PRU00498"/>
    </source>
</evidence>
<evidence type="ECO:0000256" key="3">
    <source>
        <dbReference type="SAM" id="MobiDB-lite"/>
    </source>
</evidence>
<evidence type="ECO:0000269" key="4">
    <source>
    </source>
</evidence>
<evidence type="ECO:0000269" key="5">
    <source>
    </source>
</evidence>
<evidence type="ECO:0000269" key="6">
    <source>
    </source>
</evidence>
<evidence type="ECO:0000305" key="7"/>
<evidence type="ECO:0000312" key="8">
    <source>
        <dbReference type="EMBL" id="AAF51569.2"/>
    </source>
</evidence>
<evidence type="ECO:0000312" key="9">
    <source>
        <dbReference type="FlyBase" id="FBgn0031209"/>
    </source>
</evidence>
<evidence type="ECO:0000312" key="10">
    <source>
        <dbReference type="Proteomes" id="UP000000803"/>
    </source>
</evidence>
<reference evidence="10" key="1">
    <citation type="journal article" date="2000" name="Science">
        <title>The genome sequence of Drosophila melanogaster.</title>
        <authorList>
            <person name="Adams M.D."/>
            <person name="Celniker S.E."/>
            <person name="Holt R.A."/>
            <person name="Evans C.A."/>
            <person name="Gocayne J.D."/>
            <person name="Amanatides P.G."/>
            <person name="Scherer S.E."/>
            <person name="Li P.W."/>
            <person name="Hoskins R.A."/>
            <person name="Galle R.F."/>
            <person name="George R.A."/>
            <person name="Lewis S.E."/>
            <person name="Richards S."/>
            <person name="Ashburner M."/>
            <person name="Henderson S.N."/>
            <person name="Sutton G.G."/>
            <person name="Wortman J.R."/>
            <person name="Yandell M.D."/>
            <person name="Zhang Q."/>
            <person name="Chen L.X."/>
            <person name="Brandon R.C."/>
            <person name="Rogers Y.-H.C."/>
            <person name="Blazej R.G."/>
            <person name="Champe M."/>
            <person name="Pfeiffer B.D."/>
            <person name="Wan K.H."/>
            <person name="Doyle C."/>
            <person name="Baxter E.G."/>
            <person name="Helt G."/>
            <person name="Nelson C.R."/>
            <person name="Miklos G.L.G."/>
            <person name="Abril J.F."/>
            <person name="Agbayani A."/>
            <person name="An H.-J."/>
            <person name="Andrews-Pfannkoch C."/>
            <person name="Baldwin D."/>
            <person name="Ballew R.M."/>
            <person name="Basu A."/>
            <person name="Baxendale J."/>
            <person name="Bayraktaroglu L."/>
            <person name="Beasley E.M."/>
            <person name="Beeson K.Y."/>
            <person name="Benos P.V."/>
            <person name="Berman B.P."/>
            <person name="Bhandari D."/>
            <person name="Bolshakov S."/>
            <person name="Borkova D."/>
            <person name="Botchan M.R."/>
            <person name="Bouck J."/>
            <person name="Brokstein P."/>
            <person name="Brottier P."/>
            <person name="Burtis K.C."/>
            <person name="Busam D.A."/>
            <person name="Butler H."/>
            <person name="Cadieu E."/>
            <person name="Center A."/>
            <person name="Chandra I."/>
            <person name="Cherry J.M."/>
            <person name="Cawley S."/>
            <person name="Dahlke C."/>
            <person name="Davenport L.B."/>
            <person name="Davies P."/>
            <person name="de Pablos B."/>
            <person name="Delcher A."/>
            <person name="Deng Z."/>
            <person name="Mays A.D."/>
            <person name="Dew I."/>
            <person name="Dietz S.M."/>
            <person name="Dodson K."/>
            <person name="Doup L.E."/>
            <person name="Downes M."/>
            <person name="Dugan-Rocha S."/>
            <person name="Dunkov B.C."/>
            <person name="Dunn P."/>
            <person name="Durbin K.J."/>
            <person name="Evangelista C.C."/>
            <person name="Ferraz C."/>
            <person name="Ferriera S."/>
            <person name="Fleischmann W."/>
            <person name="Fosler C."/>
            <person name="Gabrielian A.E."/>
            <person name="Garg N.S."/>
            <person name="Gelbart W.M."/>
            <person name="Glasser K."/>
            <person name="Glodek A."/>
            <person name="Gong F."/>
            <person name="Gorrell J.H."/>
            <person name="Gu Z."/>
            <person name="Guan P."/>
            <person name="Harris M."/>
            <person name="Harris N.L."/>
            <person name="Harvey D.A."/>
            <person name="Heiman T.J."/>
            <person name="Hernandez J.R."/>
            <person name="Houck J."/>
            <person name="Hostin D."/>
            <person name="Houston K.A."/>
            <person name="Howland T.J."/>
            <person name="Wei M.-H."/>
            <person name="Ibegwam C."/>
            <person name="Jalali M."/>
            <person name="Kalush F."/>
            <person name="Karpen G.H."/>
            <person name="Ke Z."/>
            <person name="Kennison J.A."/>
            <person name="Ketchum K.A."/>
            <person name="Kimmel B.E."/>
            <person name="Kodira C.D."/>
            <person name="Kraft C.L."/>
            <person name="Kravitz S."/>
            <person name="Kulp D."/>
            <person name="Lai Z."/>
            <person name="Lasko P."/>
            <person name="Lei Y."/>
            <person name="Levitsky A.A."/>
            <person name="Li J.H."/>
            <person name="Li Z."/>
            <person name="Liang Y."/>
            <person name="Lin X."/>
            <person name="Liu X."/>
            <person name="Mattei B."/>
            <person name="McIntosh T.C."/>
            <person name="McLeod M.P."/>
            <person name="McPherson D."/>
            <person name="Merkulov G."/>
            <person name="Milshina N.V."/>
            <person name="Mobarry C."/>
            <person name="Morris J."/>
            <person name="Moshrefi A."/>
            <person name="Mount S.M."/>
            <person name="Moy M."/>
            <person name="Murphy B."/>
            <person name="Murphy L."/>
            <person name="Muzny D.M."/>
            <person name="Nelson D.L."/>
            <person name="Nelson D.R."/>
            <person name="Nelson K.A."/>
            <person name="Nixon K."/>
            <person name="Nusskern D.R."/>
            <person name="Pacleb J.M."/>
            <person name="Palazzolo M."/>
            <person name="Pittman G.S."/>
            <person name="Pan S."/>
            <person name="Pollard J."/>
            <person name="Puri V."/>
            <person name="Reese M.G."/>
            <person name="Reinert K."/>
            <person name="Remington K."/>
            <person name="Saunders R.D.C."/>
            <person name="Scheeler F."/>
            <person name="Shen H."/>
            <person name="Shue B.C."/>
            <person name="Siden-Kiamos I."/>
            <person name="Simpson M."/>
            <person name="Skupski M.P."/>
            <person name="Smith T.J."/>
            <person name="Spier E."/>
            <person name="Spradling A.C."/>
            <person name="Stapleton M."/>
            <person name="Strong R."/>
            <person name="Sun E."/>
            <person name="Svirskas R."/>
            <person name="Tector C."/>
            <person name="Turner R."/>
            <person name="Venter E."/>
            <person name="Wang A.H."/>
            <person name="Wang X."/>
            <person name="Wang Z.-Y."/>
            <person name="Wassarman D.A."/>
            <person name="Weinstock G.M."/>
            <person name="Weissenbach J."/>
            <person name="Williams S.M."/>
            <person name="Woodage T."/>
            <person name="Worley K.C."/>
            <person name="Wu D."/>
            <person name="Yang S."/>
            <person name="Yao Q.A."/>
            <person name="Ye J."/>
            <person name="Yeh R.-F."/>
            <person name="Zaveri J.S."/>
            <person name="Zhan M."/>
            <person name="Zhang G."/>
            <person name="Zhao Q."/>
            <person name="Zheng L."/>
            <person name="Zheng X.H."/>
            <person name="Zhong F.N."/>
            <person name="Zhong W."/>
            <person name="Zhou X."/>
            <person name="Zhu S.C."/>
            <person name="Zhu X."/>
            <person name="Smith H.O."/>
            <person name="Gibbs R.A."/>
            <person name="Myers E.W."/>
            <person name="Rubin G.M."/>
            <person name="Venter J.C."/>
        </authorList>
    </citation>
    <scope>NUCLEOTIDE SEQUENCE [LARGE SCALE GENOMIC DNA]</scope>
    <source>
        <strain evidence="10">Berkeley</strain>
    </source>
</reference>
<reference evidence="10" key="2">
    <citation type="journal article" date="2002" name="Genome Biol.">
        <title>Annotation of the Drosophila melanogaster euchromatic genome: a systematic review.</title>
        <authorList>
            <person name="Misra S."/>
            <person name="Crosby M.A."/>
            <person name="Mungall C.J."/>
            <person name="Matthews B.B."/>
            <person name="Campbell K.S."/>
            <person name="Hradecky P."/>
            <person name="Huang Y."/>
            <person name="Kaminker J.S."/>
            <person name="Millburn G.H."/>
            <person name="Prochnik S.E."/>
            <person name="Smith C.D."/>
            <person name="Tupy J.L."/>
            <person name="Whitfield E.J."/>
            <person name="Bayraktaroglu L."/>
            <person name="Berman B.P."/>
            <person name="Bettencourt B.R."/>
            <person name="Celniker S.E."/>
            <person name="de Grey A.D.N.J."/>
            <person name="Drysdale R.A."/>
            <person name="Harris N.L."/>
            <person name="Richter J."/>
            <person name="Russo S."/>
            <person name="Schroeder A.J."/>
            <person name="Shu S.Q."/>
            <person name="Stapleton M."/>
            <person name="Yamada C."/>
            <person name="Ashburner M."/>
            <person name="Gelbart W.M."/>
            <person name="Rubin G.M."/>
            <person name="Lewis S.E."/>
        </authorList>
    </citation>
    <scope>GENOME REANNOTATION</scope>
    <source>
        <strain evidence="10">Berkeley</strain>
    </source>
</reference>
<reference evidence="7" key="3">
    <citation type="journal article" date="2009" name="Cell">
        <title>Variant ionotropic glutamate receptors as chemosensory receptors in Drosophila.</title>
        <authorList>
            <person name="Benton R."/>
            <person name="Vannice K.S."/>
            <person name="Gomez-Diaz C."/>
            <person name="Vosshall L.B."/>
        </authorList>
    </citation>
    <scope>TISSUE SPECIFICITY</scope>
</reference>
<reference evidence="7" key="4">
    <citation type="journal article" date="2016" name="Elife">
        <title>The ionotropic receptors IR21a and IR25a mediate cool sensing in Drosophila.</title>
        <authorList>
            <person name="Ni L."/>
            <person name="Klein M."/>
            <person name="Svec K.V."/>
            <person name="Budelli G."/>
            <person name="Chang E.C."/>
            <person name="Ferrer A.J."/>
            <person name="Benton R."/>
            <person name="Samuel A.D."/>
            <person name="Garrity P.A."/>
        </authorList>
    </citation>
    <scope>FUNCTION</scope>
    <scope>TISSUE SPECIFICITY</scope>
    <scope>DISRUPTION PHENOTYPE</scope>
</reference>
<reference key="5">
    <citation type="journal article" date="2016" name="Elife">
        <title>Distinct combinations of variant ionotropic glutamate receptors mediate thermosensation and hygrosensation in Drosophila.</title>
        <authorList>
            <person name="Knecht Z.A."/>
            <person name="Silbering A.F."/>
            <person name="Ni L."/>
            <person name="Klein M."/>
            <person name="Budelli G."/>
            <person name="Bell R."/>
            <person name="Abuin L."/>
            <person name="Ferrer A.J."/>
            <person name="Samuel A.D."/>
            <person name="Benton R."/>
            <person name="Garrity P.A."/>
        </authorList>
    </citation>
    <scope>FUNCTION</scope>
    <scope>DISRUPTION PHENOTYPE</scope>
</reference>
<proteinExistence type="evidence at transcript level"/>
<gene>
    <name evidence="9" type="primary">Ir21a</name>
    <name evidence="9" type="ORF">CG2657</name>
</gene>
<comment type="function">
    <text evidence="5 6">Integral part of a neural sensory system in the antenna that provides the neural basis for the response to environmental changes in temperature (thermosensation) (PubMed:27126188, PubMed:27656904). Together with Ir25a and Ir93a, mediates the response of the dorsal organ cool cells, a trio of cool-responsive neurons, to cooling and is required for cool avoidance behavior (PubMed:27126188, PubMed:27656904).</text>
</comment>
<comment type="subcellular location">
    <subcellularLocation>
        <location evidence="7">Cell membrane</location>
        <topology evidence="1">Multi-pass membrane protein</topology>
    </subcellularLocation>
</comment>
<comment type="tissue specificity">
    <text evidence="4 5">Expressed in the dorsal organ cool cells (PubMed:27126188). In the antenna, expressed in approximately six neurons in the arista as well as five to ten neurons near the third chamber of the sacculus (PubMed:19135896).</text>
</comment>
<comment type="disruption phenotype">
    <text evidence="5 6">Strong disruption of larval thermotaxis when exposed to a thermal gradient ranging from 13.5 to 21.5 degrees Celsius with mutants unable to navigate away from cooler temperatures and toward warmer temperatures (PubMed:27126188). Reduced response of dorsal organ cool cells to cooling (PubMed:27126188, PubMed:27656904). No effect on humidity preference (PubMed:27656904).</text>
</comment>
<comment type="similarity">
    <text evidence="7">Belongs to the glutamate-gated ion channel (TC 1.A.10.1) family.</text>
</comment>
<name>IR21A_DROME</name>
<keyword id="KW-0085">Behavior</keyword>
<keyword id="KW-1003">Cell membrane</keyword>
<keyword id="KW-0325">Glycoprotein</keyword>
<keyword id="KW-0407">Ion channel</keyword>
<keyword id="KW-0406">Ion transport</keyword>
<keyword id="KW-1071">Ligand-gated ion channel</keyword>
<keyword id="KW-0472">Membrane</keyword>
<keyword id="KW-0675">Receptor</keyword>
<keyword id="KW-1185">Reference proteome</keyword>
<keyword id="KW-0732">Signal</keyword>
<keyword id="KW-0812">Transmembrane</keyword>
<keyword id="KW-1133">Transmembrane helix</keyword>
<keyword id="KW-0813">Transport</keyword>
<sequence>MSYYWVALVLFTAQAFSIEGDRSASYQEKCISRRLINHYQLNKEIFGVGMCDGNNENEFRQKRRIVPTFQGNPRPRGELLASKFHVNSYNFEQTNSLVGLVNKIAQEYLNKCPPVIYYDSFVEKSDGLILENLFKTIPITFYHGEINADYEAKNKRFTSHIDCNCKSYILFLSDPLMTRKILGPQTESRVVLVSRSTQWRLRDFLSSELSSNIVNLLVIGESLMADPMRERPYVLYTHKLYADGLGSNTPVVLTSWIKGALSRPHINLFPSKFQFGFAGHRFQISAANQPPFIFRIRTLDSSGMGQLRWDGVEFRLLTMISKRLNFSIDITETPTRSNTRGVVDTIQEQIIERTVDIGMSGIYITQERLMDSAMSVGHSPDCAAFITLASKALPKYRAIMGPFQWPVWVALICVYLGGIFPIVFTDRLTLSHLMGNWGEVENMFWYVFGMFTNAFSFTGKYSWSNTRKNSTRLLIGAYWLFTIIITSCYTGSIIAFVTLPAFPDTVDSVLDLLGLFFRVGTLNNGGWETWFQNSTHIPTSRLYKKMEFVGSVDEGIGNVTQSFFWNYAFLGSKAQLEYLVQSNFSDENISRRSALHLSEECFALFQIGFLFPRESVYKIKIDSMILLAQQSGLIAKINNEVSWVMQRSSSGRLLQASSSNSLREIIQEERQLTTADTEGMFLLMALGYFLGATALVSEIVGGITNKCRQIIKRSRKSAASSWSSASSGSMLRTNAEQLSHDKRKANRREAAEVAQKMSFGMRELNLTRATLREIYGSYGAPETDHGQLDIVHTEFPNSSAKLNNIEDEESREALESLQRLDEFMDQMDNDGNPSSHTFRIDN</sequence>
<dbReference type="EMBL" id="AE014134">
    <property type="protein sequence ID" value="AAF51569.2"/>
    <property type="molecule type" value="Genomic_DNA"/>
</dbReference>
<dbReference type="RefSeq" id="NP_001097043.1">
    <property type="nucleotide sequence ID" value="NM_001103573.2"/>
</dbReference>
<dbReference type="FunCoup" id="Q9VPI2">
    <property type="interactions" value="11"/>
</dbReference>
<dbReference type="STRING" id="7227.FBpp0111921"/>
<dbReference type="TCDB" id="1.A.10.1.26">
    <property type="family name" value="the glutamate-gated ion channel (gic) family of neurotransmitter receptors"/>
</dbReference>
<dbReference type="GlyCosmos" id="Q9VPI2">
    <property type="glycosylation" value="8 sites, No reported glycans"/>
</dbReference>
<dbReference type="GlyGen" id="Q9VPI2">
    <property type="glycosylation" value="8 sites"/>
</dbReference>
<dbReference type="PaxDb" id="7227-FBpp0111921"/>
<dbReference type="EnsemblMetazoa" id="FBtr0113008">
    <property type="protein sequence ID" value="FBpp0111921"/>
    <property type="gene ID" value="FBgn0031209"/>
</dbReference>
<dbReference type="GeneID" id="33157"/>
<dbReference type="KEGG" id="dme:Dmel_CG2657"/>
<dbReference type="UCSC" id="CG2657-RB">
    <property type="organism name" value="d. melanogaster"/>
</dbReference>
<dbReference type="AGR" id="FB:FBgn0031209"/>
<dbReference type="CTD" id="33157"/>
<dbReference type="FlyBase" id="FBgn0031209">
    <property type="gene designation" value="Ir21a"/>
</dbReference>
<dbReference type="VEuPathDB" id="VectorBase:FBgn0031209"/>
<dbReference type="eggNOG" id="KOG1052">
    <property type="taxonomic scope" value="Eukaryota"/>
</dbReference>
<dbReference type="HOGENOM" id="CLU_012744_1_0_1"/>
<dbReference type="InParanoid" id="Q9VPI2"/>
<dbReference type="OMA" id="PPYIFRI"/>
<dbReference type="OrthoDB" id="6500454at2759"/>
<dbReference type="PhylomeDB" id="Q9VPI2"/>
<dbReference type="Reactome" id="R-DME-204005">
    <property type="pathway name" value="COPII-mediated vesicle transport"/>
</dbReference>
<dbReference type="Reactome" id="R-DME-399710">
    <property type="pathway name" value="Activation of AMPA receptors"/>
</dbReference>
<dbReference type="Reactome" id="R-DME-416993">
    <property type="pathway name" value="Trafficking of GluR2-containing AMPA receptors"/>
</dbReference>
<dbReference type="Reactome" id="R-DME-438066">
    <property type="pathway name" value="Unblocking of NMDA receptors, glutamate binding and activation"/>
</dbReference>
<dbReference type="Reactome" id="R-DME-5694530">
    <property type="pathway name" value="Cargo concentration in the ER"/>
</dbReference>
<dbReference type="Reactome" id="R-DME-8849932">
    <property type="pathway name" value="Synaptic adhesion-like molecules"/>
</dbReference>
<dbReference type="BioGRID-ORCS" id="33157">
    <property type="hits" value="0 hits in 1 CRISPR screen"/>
</dbReference>
<dbReference type="GenomeRNAi" id="33157"/>
<dbReference type="PRO" id="PR:Q9VPI2"/>
<dbReference type="Proteomes" id="UP000000803">
    <property type="component" value="Chromosome 2L"/>
</dbReference>
<dbReference type="Bgee" id="FBgn0031209">
    <property type="expression patterns" value="Expressed in neuron of aristal sensillum (Drosophila) in antenna and 10 other cell types or tissues"/>
</dbReference>
<dbReference type="GO" id="GO:0016020">
    <property type="term" value="C:membrane"/>
    <property type="evidence" value="ECO:0000255"/>
    <property type="project" value="FlyBase"/>
</dbReference>
<dbReference type="GO" id="GO:0005886">
    <property type="term" value="C:plasma membrane"/>
    <property type="evidence" value="ECO:0000318"/>
    <property type="project" value="GO_Central"/>
</dbReference>
<dbReference type="GO" id="GO:0098839">
    <property type="term" value="C:postsynaptic density membrane"/>
    <property type="evidence" value="ECO:0000318"/>
    <property type="project" value="GO_Central"/>
</dbReference>
<dbReference type="GO" id="GO:0008066">
    <property type="term" value="F:glutamate receptor activity"/>
    <property type="evidence" value="ECO:0000318"/>
    <property type="project" value="GO_Central"/>
</dbReference>
<dbReference type="GO" id="GO:0015276">
    <property type="term" value="F:ligand-gated monoatomic ion channel activity"/>
    <property type="evidence" value="ECO:0000255"/>
    <property type="project" value="FlyBase"/>
</dbReference>
<dbReference type="GO" id="GO:1904315">
    <property type="term" value="F:transmitter-gated monoatomic ion channel activity involved in regulation of postsynaptic membrane potential"/>
    <property type="evidence" value="ECO:0000318"/>
    <property type="project" value="GO_Central"/>
</dbReference>
<dbReference type="GO" id="GO:0050907">
    <property type="term" value="P:detection of chemical stimulus involved in sensory perception"/>
    <property type="evidence" value="ECO:0000270"/>
    <property type="project" value="FlyBase"/>
</dbReference>
<dbReference type="GO" id="GO:0050804">
    <property type="term" value="P:modulation of chemical synaptic transmission"/>
    <property type="evidence" value="ECO:0000318"/>
    <property type="project" value="GO_Central"/>
</dbReference>
<dbReference type="GO" id="GO:0035249">
    <property type="term" value="P:synaptic transmission, glutamatergic"/>
    <property type="evidence" value="ECO:0000318"/>
    <property type="project" value="GO_Central"/>
</dbReference>
<dbReference type="FunFam" id="1.10.287.70:FF:000171">
    <property type="entry name" value="Ionotropic receptor 21a"/>
    <property type="match status" value="1"/>
</dbReference>
<dbReference type="FunFam" id="3.40.190.10:FF:000438">
    <property type="entry name" value="Ionotropic receptor IR21a"/>
    <property type="match status" value="1"/>
</dbReference>
<dbReference type="Gene3D" id="1.10.287.70">
    <property type="match status" value="1"/>
</dbReference>
<dbReference type="Gene3D" id="3.40.190.10">
    <property type="entry name" value="Periplasmic binding protein-like II"/>
    <property type="match status" value="1"/>
</dbReference>
<dbReference type="InterPro" id="IPR052192">
    <property type="entry name" value="Insect_Ionotropic_Sensory_Rcpt"/>
</dbReference>
<dbReference type="InterPro" id="IPR001320">
    <property type="entry name" value="Iontro_rcpt_C"/>
</dbReference>
<dbReference type="PANTHER" id="PTHR42643">
    <property type="entry name" value="IONOTROPIC RECEPTOR 20A-RELATED"/>
    <property type="match status" value="1"/>
</dbReference>
<dbReference type="PANTHER" id="PTHR42643:SF24">
    <property type="entry name" value="IONOTROPIC RECEPTOR 60A"/>
    <property type="match status" value="1"/>
</dbReference>
<dbReference type="Pfam" id="PF00060">
    <property type="entry name" value="Lig_chan"/>
    <property type="match status" value="1"/>
</dbReference>
<dbReference type="SUPFAM" id="SSF53850">
    <property type="entry name" value="Periplasmic binding protein-like II"/>
    <property type="match status" value="1"/>
</dbReference>
<feature type="signal peptide" evidence="1">
    <location>
        <begin position="1"/>
        <end position="15"/>
    </location>
</feature>
<feature type="chain" id="PRO_5004338393" description="Ionotropic receptor 21a">
    <location>
        <begin position="16"/>
        <end position="842"/>
    </location>
</feature>
<feature type="transmembrane region" description="Helical" evidence="1">
    <location>
        <begin position="405"/>
        <end position="425"/>
    </location>
</feature>
<feature type="transmembrane region" description="Helical" evidence="1">
    <location>
        <begin position="437"/>
        <end position="457"/>
    </location>
</feature>
<feature type="transmembrane region" description="Helical" evidence="1">
    <location>
        <begin position="479"/>
        <end position="499"/>
    </location>
</feature>
<feature type="transmembrane region" description="Helical" evidence="1">
    <location>
        <begin position="680"/>
        <end position="700"/>
    </location>
</feature>
<feature type="region of interest" description="Disordered" evidence="3">
    <location>
        <begin position="722"/>
        <end position="745"/>
    </location>
</feature>
<feature type="glycosylation site" description="N-linked (GlcNAc...) asparagine" evidence="2">
    <location>
        <position position="325"/>
    </location>
</feature>
<feature type="glycosylation site" description="N-linked (GlcNAc...) asparagine" evidence="2">
    <location>
        <position position="469"/>
    </location>
</feature>
<feature type="glycosylation site" description="N-linked (GlcNAc...) asparagine" evidence="2">
    <location>
        <position position="533"/>
    </location>
</feature>
<feature type="glycosylation site" description="N-linked (GlcNAc...) asparagine" evidence="2">
    <location>
        <position position="558"/>
    </location>
</feature>
<feature type="glycosylation site" description="N-linked (GlcNAc...) asparagine" evidence="2">
    <location>
        <position position="583"/>
    </location>
</feature>
<feature type="glycosylation site" description="N-linked (GlcNAc...) asparagine" evidence="2">
    <location>
        <position position="588"/>
    </location>
</feature>
<feature type="glycosylation site" description="N-linked (GlcNAc...) asparagine" evidence="2">
    <location>
        <position position="765"/>
    </location>
</feature>
<feature type="glycosylation site" description="N-linked (GlcNAc...) asparagine" evidence="2">
    <location>
        <position position="797"/>
    </location>
</feature>
<protein>
    <recommendedName>
        <fullName evidence="8">Ionotropic receptor 21a</fullName>
    </recommendedName>
</protein>
<organism evidence="10">
    <name type="scientific">Drosophila melanogaster</name>
    <name type="common">Fruit fly</name>
    <dbReference type="NCBI Taxonomy" id="7227"/>
    <lineage>
        <taxon>Eukaryota</taxon>
        <taxon>Metazoa</taxon>
        <taxon>Ecdysozoa</taxon>
        <taxon>Arthropoda</taxon>
        <taxon>Hexapoda</taxon>
        <taxon>Insecta</taxon>
        <taxon>Pterygota</taxon>
        <taxon>Neoptera</taxon>
        <taxon>Endopterygota</taxon>
        <taxon>Diptera</taxon>
        <taxon>Brachycera</taxon>
        <taxon>Muscomorpha</taxon>
        <taxon>Ephydroidea</taxon>
        <taxon>Drosophilidae</taxon>
        <taxon>Drosophila</taxon>
        <taxon>Sophophora</taxon>
    </lineage>
</organism>
<accession>Q9VPI2</accession>